<organism>
    <name type="scientific">Oldenlandia affinis</name>
    <dbReference type="NCBI Taxonomy" id="60225"/>
    <lineage>
        <taxon>Eukaryota</taxon>
        <taxon>Viridiplantae</taxon>
        <taxon>Streptophyta</taxon>
        <taxon>Embryophyta</taxon>
        <taxon>Tracheophyta</taxon>
        <taxon>Spermatophyta</taxon>
        <taxon>Magnoliopsida</taxon>
        <taxon>eudicotyledons</taxon>
        <taxon>Gunneridae</taxon>
        <taxon>Pentapetalae</taxon>
        <taxon>asterids</taxon>
        <taxon>lamiids</taxon>
        <taxon>Gentianales</taxon>
        <taxon>Rubiaceae</taxon>
        <taxon>Rubioideae</taxon>
        <taxon>Spermacoceae</taxon>
        <taxon>Hedyotis-Oldenlandia complex</taxon>
        <taxon>Oldenlandia</taxon>
    </lineage>
</organism>
<accession>P83938</accession>
<dbReference type="PDB" id="1ZNU">
    <property type="method" value="NMR"/>
    <property type="chains" value="A=1-29"/>
</dbReference>
<dbReference type="PDB" id="7RFA">
    <property type="method" value="NMR"/>
    <property type="chains" value="A=1-28"/>
</dbReference>
<dbReference type="PDBsum" id="1ZNU"/>
<dbReference type="PDBsum" id="7RFA"/>
<dbReference type="BMRB" id="P83938"/>
<dbReference type="SMR" id="P83938"/>
<dbReference type="GO" id="GO:0006952">
    <property type="term" value="P:defense response"/>
    <property type="evidence" value="ECO:0007669"/>
    <property type="project" value="UniProtKB-KW"/>
</dbReference>
<dbReference type="InterPro" id="IPR005535">
    <property type="entry name" value="Cyclotide"/>
</dbReference>
<dbReference type="InterPro" id="IPR012324">
    <property type="entry name" value="Cyclotide_moebius_CS"/>
</dbReference>
<dbReference type="InterPro" id="IPR036146">
    <property type="entry name" value="Cyclotide_sf"/>
</dbReference>
<dbReference type="Pfam" id="PF03784">
    <property type="entry name" value="Cyclotide"/>
    <property type="match status" value="1"/>
</dbReference>
<dbReference type="PIRSF" id="PIRSF037891">
    <property type="entry name" value="Cycloviolacin"/>
    <property type="match status" value="1"/>
</dbReference>
<dbReference type="SUPFAM" id="SSF57038">
    <property type="entry name" value="Cyclotides"/>
    <property type="match status" value="1"/>
</dbReference>
<dbReference type="PROSITE" id="PS51052">
    <property type="entry name" value="CYCLOTIDE"/>
    <property type="match status" value="1"/>
</dbReference>
<dbReference type="PROSITE" id="PS60009">
    <property type="entry name" value="CYCLOTIDE_MOEBIUS"/>
    <property type="match status" value="1"/>
</dbReference>
<feature type="peptide" id="PRO_0000043629" description="Kalata-B4" evidence="2 3">
    <location>
        <begin position="1"/>
        <end position="29"/>
    </location>
</feature>
<feature type="disulfide bond" evidence="1 2">
    <location>
        <begin position="5"/>
        <end position="19"/>
    </location>
</feature>
<feature type="disulfide bond" evidence="1 2">
    <location>
        <begin position="9"/>
        <end position="21"/>
    </location>
</feature>
<feature type="disulfide bond" evidence="1 2">
    <location>
        <begin position="14"/>
        <end position="26"/>
    </location>
</feature>
<feature type="cross-link" description="Cyclopeptide (Gly-Asp)" evidence="3 4">
    <location>
        <begin position="1"/>
        <end position="29"/>
    </location>
</feature>
<feature type="strand" evidence="6">
    <location>
        <begin position="5"/>
        <end position="8"/>
    </location>
</feature>
<feature type="helix" evidence="6">
    <location>
        <begin position="10"/>
        <end position="12"/>
    </location>
</feature>
<proteinExistence type="evidence at protein level"/>
<keyword id="KW-0002">3D-structure</keyword>
<keyword id="KW-0903">Direct protein sequencing</keyword>
<keyword id="KW-1015">Disulfide bond</keyword>
<keyword id="KW-0960">Knottin</keyword>
<keyword id="KW-0611">Plant defense</keyword>
<sequence>GLPVCGETCVGGTCNTPGCTCSWPVCTRD</sequence>
<reference evidence="5" key="1">
    <citation type="journal article" date="1999" name="J. Mol. Biol.">
        <title>Plant cyclotides: a unique family of cyclic and knotted proteins that defines the cyclic cystine knot structural motif.</title>
        <authorList>
            <person name="Craik D.J."/>
            <person name="Daly N.L."/>
            <person name="Bond T."/>
            <person name="Waine C."/>
        </authorList>
    </citation>
    <scope>PROTEIN SEQUENCE</scope>
</reference>
<reference evidence="5" key="2">
    <citation type="journal article" date="2007" name="ChemBioChem">
        <title>The cyclotide fingerprint in Oldenlandia affinis: elucidation of chemically modified, linear and novel macrocyclic peptides.</title>
        <authorList>
            <person name="Plan M.R.R."/>
            <person name="Goeransson U."/>
            <person name="Clark R.J."/>
            <person name="Daly N.L."/>
            <person name="Colgrave M.L."/>
            <person name="Craik D.J."/>
        </authorList>
    </citation>
    <scope>PROTEIN SEQUENCE</scope>
    <scope>MASS SPECTROMETRY</scope>
</reference>
<protein>
    <recommendedName>
        <fullName>Kalata-B4</fullName>
    </recommendedName>
</protein>
<evidence type="ECO:0000250" key="1">
    <source>
        <dbReference type="UniProtKB" id="P83836"/>
    </source>
</evidence>
<evidence type="ECO:0000255" key="2">
    <source>
        <dbReference type="PROSITE-ProRule" id="PRU00395"/>
    </source>
</evidence>
<evidence type="ECO:0000269" key="3">
    <source>
    </source>
</evidence>
<evidence type="ECO:0000269" key="4">
    <source>
    </source>
</evidence>
<evidence type="ECO:0000305" key="5"/>
<evidence type="ECO:0007829" key="6">
    <source>
        <dbReference type="PDB" id="7RFA"/>
    </source>
</evidence>
<name>KAB4_OLDAF</name>
<comment type="function">
    <text evidence="5">Probably participates in a plant defense mechanism.</text>
</comment>
<comment type="domain">
    <text evidence="1">The presence of a 'disulfide through disulfide knot' structurally defines this protein as a knottin.</text>
</comment>
<comment type="PTM">
    <text evidence="2 3">This is a cyclic peptide.</text>
</comment>
<comment type="mass spectrometry"/>
<comment type="similarity">
    <text evidence="2">Belongs to the cyclotide family. Moebius subfamily.</text>
</comment>
<comment type="caution">
    <text evidence="5">This peptide is cyclic. The start position was chosen by similarity to OAK1 (kalata-B1) for which the DNA sequence is known.</text>
</comment>